<comment type="function">
    <text evidence="3 4 5">Probable transcriptional regulator that acts as a repressor of the gibberellin (GA) signaling pathway. Probably acts by participating in large multiprotein complexes that repress transcription of GA-inducible genes. Upon GA application, it is degraded by the proteasome, allowing the GA signaling pathway. Acts as a negative regulator of GAMYB gene expression.</text>
</comment>
<comment type="subcellular location">
    <subcellularLocation>
        <location evidence="4">Nucleus</location>
    </subcellularLocation>
</comment>
<comment type="tissue specificity">
    <text evidence="3">Apparently restricted to regions where growth is occurring in the leaf blade. Localizes almost exclusively to the basal elongation zone (EZ) for the elongating blades of L1, L2 and L3. More detailed fractionation of the L3 blade shows that in cv. Himalaya, it is preferentially localized to the basal third of the EZ, but its presence can still be detected toward the end of the EZ (at protein level).</text>
</comment>
<comment type="domain">
    <text evidence="6">The DELLA motif is required for its GA-induced degradation.</text>
</comment>
<comment type="PTM">
    <text evidence="5">Phosphorylated.</text>
</comment>
<comment type="PTM">
    <text evidence="6">Ubiquitinated (Probable). Upon GA application it is ubiquitinated, leading to its subsequent degradation.</text>
</comment>
<comment type="similarity">
    <text evidence="6">Belongs to the GRAS family. DELLA subfamily.</text>
</comment>
<accession>Q8W127</accession>
<protein>
    <recommendedName>
        <fullName>DELLA protein SLN1</fullName>
    </recommendedName>
    <alternativeName>
        <fullName>Slender protein 1</fullName>
    </alternativeName>
</protein>
<sequence>MKREYQDGGGSGGGGDEMGSSRDKMMVSSSEAGEGEEVDELLAALGYKVRASDMADVAQKLEQLEMAMGMGGPAPDDGFATHLATDTVHYNPTDLSSWVESMLSELNAPPPPLPPAPPQLNASTSSTVTGGGGYFDLPPSVDSSSSTYALRPIISPPVAPADLSADSVRDPKRMRTGGSSTSSSSSSSSSLGGGAARSSVVEAAPPVAAAAAAPALPVVVVDTQEAGIRLVHALLACAEAVQQENLSAAEALVKQIPLLAASQGGAMRKVAAYFGEALARRVFRFRPQPDSSLLDAAFADLLHAHFYESCPYLKFAHFTANQAILEAFAGCRRVHVVDFGIKQGMQWPALLQALALRPGGPPSFRLTGVGPPQPDETDALQQVGWKLAQFAHTIRVDFQYRGLVAATLADLEPFMLQPEGEEDPNEEPEVIAVNSVFEMHRLLAQPGALEKVLGTVRAVRPRIVTVVEQEANHNSGSFLDRFTESLHYYSTMFDSLEGGSSGGPSEVSSGGAAPAAAAGTDQVMSEVYLGRQICNVVACEGTERTERHETLGQWRNRLGNAGFETVHLGSNAYKQASTLLALFAGGDGYKVEEKEGCLTLGWHTRPLIATSAWRLAAP</sequence>
<proteinExistence type="evidence at protein level"/>
<keyword id="KW-0939">Gibberellin signaling pathway</keyword>
<keyword id="KW-0539">Nucleus</keyword>
<keyword id="KW-0597">Phosphoprotein</keyword>
<keyword id="KW-0678">Repressor</keyword>
<keyword id="KW-0804">Transcription</keyword>
<keyword id="KW-0805">Transcription regulation</keyword>
<keyword id="KW-0832">Ubl conjugation</keyword>
<reference key="1">
    <citation type="journal article" date="2002" name="Plant Physiol.">
        <title>Mutants at the Slender1 locus of barley cv Himalaya. Molecular and physiological characterization.</title>
        <authorList>
            <person name="Chandler P.M."/>
            <person name="Marion-Poll A."/>
            <person name="Ellis M."/>
            <person name="Gubler F."/>
        </authorList>
    </citation>
    <scope>NUCLEOTIDE SEQUENCE [GENOMIC DNA]</scope>
    <scope>FUNCTION</scope>
    <scope>TISSUE SPECIFICITY</scope>
    <scope>MUTAGENESIS OF GLY-46</scope>
</reference>
<reference key="2">
    <citation type="journal article" date="2002" name="Plant Physiol.">
        <title>Gibberellin signaling in barley aleurone cells. Control of SLN1 and GAMYB expression.</title>
        <authorList>
            <person name="Gubler F."/>
            <person name="Chandler P.M."/>
            <person name="White R.G."/>
            <person name="Llewellyn D.J."/>
            <person name="Jacobsen J.V."/>
        </authorList>
    </citation>
    <scope>FUNCTION</scope>
    <scope>SUBCELLULAR LOCATION</scope>
    <scope>DEGRADATION</scope>
</reference>
<reference key="3">
    <citation type="journal article" date="2002" name="Plant Cell">
        <title>Gibberellin-mediated proteasome-dependent degradation of the barley DELLA protein SLN1 repressor.</title>
        <authorList>
            <person name="Fu X."/>
            <person name="Richards D.E."/>
            <person name="Ait-Ali T."/>
            <person name="Hynes L.W."/>
            <person name="Ougham H."/>
            <person name="Peng J."/>
            <person name="Harberd N.P."/>
        </authorList>
    </citation>
    <scope>FUNCTION</scope>
    <scope>PHOSPHORYLATION</scope>
    <scope>PROBABLE UBIQUITINATION</scope>
</reference>
<dbReference type="EMBL" id="AF460219">
    <property type="protein sequence ID" value="AAL66734.1"/>
    <property type="molecule type" value="Genomic_DNA"/>
</dbReference>
<dbReference type="SMR" id="Q8W127"/>
<dbReference type="ExpressionAtlas" id="Q8W127">
    <property type="expression patterns" value="baseline and differential"/>
</dbReference>
<dbReference type="GO" id="GO:0005634">
    <property type="term" value="C:nucleus"/>
    <property type="evidence" value="ECO:0007669"/>
    <property type="project" value="UniProtKB-SubCell"/>
</dbReference>
<dbReference type="GO" id="GO:0009740">
    <property type="term" value="P:gibberellic acid mediated signaling pathway"/>
    <property type="evidence" value="ECO:0007669"/>
    <property type="project" value="UniProtKB-KW"/>
</dbReference>
<dbReference type="FunFam" id="1.10.10.1290:FF:000001">
    <property type="entry name" value="DELLA protein GAI"/>
    <property type="match status" value="1"/>
</dbReference>
<dbReference type="Gene3D" id="1.10.10.1290">
    <property type="entry name" value="Transcriptional regulator DELLA, N-terminal domain"/>
    <property type="match status" value="1"/>
</dbReference>
<dbReference type="InterPro" id="IPR038088">
    <property type="entry name" value="DELLA_N_sf"/>
</dbReference>
<dbReference type="InterPro" id="IPR021914">
    <property type="entry name" value="TF_DELLA_N"/>
</dbReference>
<dbReference type="InterPro" id="IPR005202">
    <property type="entry name" value="TF_GRAS"/>
</dbReference>
<dbReference type="PANTHER" id="PTHR31636">
    <property type="entry name" value="OSJNBA0084A10.13 PROTEIN-RELATED"/>
    <property type="match status" value="1"/>
</dbReference>
<dbReference type="Pfam" id="PF12041">
    <property type="entry name" value="DELLA"/>
    <property type="match status" value="1"/>
</dbReference>
<dbReference type="Pfam" id="PF03514">
    <property type="entry name" value="GRAS"/>
    <property type="match status" value="1"/>
</dbReference>
<dbReference type="SMART" id="SM01129">
    <property type="entry name" value="DELLA"/>
    <property type="match status" value="1"/>
</dbReference>
<dbReference type="PROSITE" id="PS50985">
    <property type="entry name" value="GRAS"/>
    <property type="match status" value="1"/>
</dbReference>
<gene>
    <name type="primary">SLN1</name>
</gene>
<organism>
    <name type="scientific">Hordeum vulgare</name>
    <name type="common">Barley</name>
    <dbReference type="NCBI Taxonomy" id="4513"/>
    <lineage>
        <taxon>Eukaryota</taxon>
        <taxon>Viridiplantae</taxon>
        <taxon>Streptophyta</taxon>
        <taxon>Embryophyta</taxon>
        <taxon>Tracheophyta</taxon>
        <taxon>Spermatophyta</taxon>
        <taxon>Magnoliopsida</taxon>
        <taxon>Liliopsida</taxon>
        <taxon>Poales</taxon>
        <taxon>Poaceae</taxon>
        <taxon>BOP clade</taxon>
        <taxon>Pooideae</taxon>
        <taxon>Triticodae</taxon>
        <taxon>Triticeae</taxon>
        <taxon>Hordeinae</taxon>
        <taxon>Hordeum</taxon>
    </lineage>
</organism>
<name>SLN1_HORVU</name>
<evidence type="ECO:0000255" key="1">
    <source>
        <dbReference type="PROSITE-ProRule" id="PRU01191"/>
    </source>
</evidence>
<evidence type="ECO:0000256" key="2">
    <source>
        <dbReference type="SAM" id="MobiDB-lite"/>
    </source>
</evidence>
<evidence type="ECO:0000269" key="3">
    <source>
    </source>
</evidence>
<evidence type="ECO:0000269" key="4">
    <source>
    </source>
</evidence>
<evidence type="ECO:0000269" key="5">
    <source>
    </source>
</evidence>
<evidence type="ECO:0000305" key="6"/>
<feature type="chain" id="PRO_0000132244" description="DELLA protein SLN1">
    <location>
        <begin position="1"/>
        <end position="618"/>
    </location>
</feature>
<feature type="domain" description="GRAS" evidence="1">
    <location>
        <begin position="221"/>
        <end position="614"/>
    </location>
</feature>
<feature type="region of interest" description="Disordered" evidence="2">
    <location>
        <begin position="1"/>
        <end position="36"/>
    </location>
</feature>
<feature type="region of interest" description="Disordered" evidence="2">
    <location>
        <begin position="106"/>
        <end position="137"/>
    </location>
</feature>
<feature type="region of interest" description="Disordered" evidence="2">
    <location>
        <begin position="159"/>
        <end position="197"/>
    </location>
</feature>
<feature type="region of interest" description="Leucine repeat I (LRI)" evidence="1">
    <location>
        <begin position="228"/>
        <end position="284"/>
    </location>
</feature>
<feature type="region of interest" description="VHIID" evidence="1">
    <location>
        <begin position="303"/>
        <end position="368"/>
    </location>
</feature>
<feature type="region of interest" description="Leucine repeat II (LRII)" evidence="1">
    <location>
        <begin position="382"/>
        <end position="421"/>
    </location>
</feature>
<feature type="region of interest" description="PFYRE" evidence="1">
    <location>
        <begin position="431"/>
        <end position="535"/>
    </location>
</feature>
<feature type="region of interest" description="SAW" evidence="1">
    <location>
        <begin position="538"/>
        <end position="614"/>
    </location>
</feature>
<feature type="short sequence motif" description="DELLA motif">
    <location>
        <begin position="39"/>
        <end position="43"/>
    </location>
</feature>
<feature type="short sequence motif" description="LxCxE motif" evidence="1">
    <location>
        <begin position="235"/>
        <end position="239"/>
    </location>
</feature>
<feature type="short sequence motif" description="VHIID" evidence="1">
    <location>
        <begin position="334"/>
        <end position="338"/>
    </location>
</feature>
<feature type="compositionally biased region" description="Gly residues" evidence="2">
    <location>
        <begin position="7"/>
        <end position="17"/>
    </location>
</feature>
<feature type="compositionally biased region" description="Pro residues" evidence="2">
    <location>
        <begin position="108"/>
        <end position="118"/>
    </location>
</feature>
<feature type="compositionally biased region" description="Low complexity" evidence="2">
    <location>
        <begin position="119"/>
        <end position="128"/>
    </location>
</feature>
<feature type="compositionally biased region" description="Low complexity" evidence="2">
    <location>
        <begin position="176"/>
        <end position="197"/>
    </location>
</feature>
<feature type="mutagenesis site" description="In sln1-d; dominant mutation that causes a dwarf phenotype probably due to its inability to be degraded." evidence="3">
    <original>G</original>
    <variation>E</variation>
    <location>
        <position position="46"/>
    </location>
</feature>